<evidence type="ECO:0000255" key="1">
    <source>
        <dbReference type="PROSITE-ProRule" id="PRU00108"/>
    </source>
</evidence>
<evidence type="ECO:0000255" key="2">
    <source>
        <dbReference type="PROSITE-ProRule" id="PRU00374"/>
    </source>
</evidence>
<evidence type="ECO:0000256" key="3">
    <source>
        <dbReference type="SAM" id="MobiDB-lite"/>
    </source>
</evidence>
<evidence type="ECO:0000269" key="4">
    <source>
    </source>
</evidence>
<evidence type="ECO:0000269" key="5">
    <source>
    </source>
</evidence>
<evidence type="ECO:0000305" key="6"/>
<name>ONEC3_MOUSE</name>
<protein>
    <recommendedName>
        <fullName>One cut domain family member 3</fullName>
    </recommendedName>
    <alternativeName>
        <fullName>One cut homeobox 3</fullName>
    </alternativeName>
    <alternativeName>
        <fullName>Transcription factor ONECUT-3</fullName>
        <shortName>OC-3</shortName>
    </alternativeName>
</protein>
<accession>Q8K557</accession>
<accession>Q6PDH9</accession>
<reference key="1">
    <citation type="journal article" date="2002" name="Biochem. Biophys. Res. Commun.">
        <title>OC-3, a novel mammalian member of the ONECUT class of transcription factors.</title>
        <authorList>
            <person name="Vanhorenbeeck V."/>
            <person name="Jacquemin P."/>
            <person name="Lemaigre F.P."/>
            <person name="Rousseau G.G."/>
        </authorList>
    </citation>
    <scope>NUCLEOTIDE SEQUENCE [MRNA]</scope>
    <scope>FUNCTION</scope>
    <scope>TISSUE SPECIFICITY</scope>
    <scope>DEVELOPMENTAL STAGE</scope>
    <source>
        <strain>129/SvEvTacfBr</strain>
    </source>
</reference>
<reference key="2">
    <citation type="journal article" date="2004" name="Genome Res.">
        <title>The status, quality, and expansion of the NIH full-length cDNA project: the Mammalian Gene Collection (MGC).</title>
        <authorList>
            <consortium name="The MGC Project Team"/>
        </authorList>
    </citation>
    <scope>NUCLEOTIDE SEQUENCE [LARGE SCALE MRNA]</scope>
    <source>
        <strain>C57BL/6J</strain>
        <tissue>Brain</tissue>
    </source>
</reference>
<reference key="3">
    <citation type="journal article" date="2004" name="J. Biol. Chem.">
        <title>The transcription factor hepatocyte nuclear factor-6/Onecut-1 controls the expression of its paralog Onecut-3 in developing mouse endoderm.</title>
        <authorList>
            <person name="Pierreux C.E."/>
            <person name="Vanhorenbeeck V."/>
            <person name="Jacquemin P."/>
            <person name="Lemaigre F.P."/>
            <person name="Rousseau G.G."/>
        </authorList>
    </citation>
    <scope>DEVELOPMENTAL STAGE</scope>
    <scope>INDUCTION BY ONECUT1</scope>
    <scope>SUBCELLULAR LOCATION</scope>
</reference>
<feature type="chain" id="PRO_0000271219" description="One cut domain family member 3">
    <location>
        <begin position="1"/>
        <end position="490"/>
    </location>
</feature>
<feature type="DNA-binding region" description="CUT" evidence="2">
    <location>
        <begin position="309"/>
        <end position="395"/>
    </location>
</feature>
<feature type="DNA-binding region" description="Homeobox" evidence="1">
    <location>
        <begin position="411"/>
        <end position="470"/>
    </location>
</feature>
<feature type="region of interest" description="Disordered" evidence="3">
    <location>
        <begin position="130"/>
        <end position="155"/>
    </location>
</feature>
<feature type="region of interest" description="Disordered" evidence="3">
    <location>
        <begin position="193"/>
        <end position="213"/>
    </location>
</feature>
<feature type="region of interest" description="Disordered" evidence="3">
    <location>
        <begin position="287"/>
        <end position="316"/>
    </location>
</feature>
<feature type="compositionally biased region" description="Pro residues" evidence="3">
    <location>
        <begin position="143"/>
        <end position="152"/>
    </location>
</feature>
<feature type="compositionally biased region" description="Gly residues" evidence="3">
    <location>
        <begin position="290"/>
        <end position="311"/>
    </location>
</feature>
<feature type="sequence conflict" description="In Ref. 1; AAL86921." evidence="6" ref="1">
    <original>A</original>
    <variation>R</variation>
    <location>
        <position position="64"/>
    </location>
</feature>
<gene>
    <name type="primary">Onecut3</name>
</gene>
<sequence length="490" mass="49571">MELSLESLGGLHGVTHAQAGELLSPGHARSAAAQHRSLVASGRPGLVAGMASLLDGGGAGGGGAGGAGAAGAAGGGPDFRGELAGPLHPAMGMACEAPGLGGTYTTLTPLQHLPPLAAVADKFHQHAVAGAHGGHPHAHPHPATAPPPPPPQRLAASVSGSFTLMRDERAALASVGHLYGPYGKELPTMGSPLSPLPSALPPALHSAPQPPPPPPLAAYGAPGHLAGDKLLPPAAFEPHAALLGRAEDALARGLPGGGGGAGGGGAAGGAAAGLLAPLGGLAAAGAHGPHSGGGGPGGGGGAGGGSGGPGAGAAAEEINTKEVAQRITAELKRYSIPQAIFAQRILCRSQGTLSDLLRNPKPWSKLKSGRETFRRMWKWLQEPEFQRMSALRLAACKRKEQDQQKERALQPKKQRLVFTDLQRRTLIAIFKENKRPSKEMQATISQQLGLELNTVSNFFMNARRRCMNRWAEEPGATPGTGTATATFSKA</sequence>
<comment type="function">
    <text evidence="4">Transcriptional activator. Binds the consensus DNA sequence 5'-DHWATTGAYTWWD-3' on a variety of gene promoters such as those of HNF3B and TTR.</text>
</comment>
<comment type="subcellular location">
    <subcellularLocation>
        <location evidence="1 2 5">Nucleus</location>
    </subcellularLocation>
</comment>
<comment type="tissue specificity">
    <text evidence="4">Specifically expressed in brain, stomach and gut. Within the gut, expressed only in duodenum and jejunum.</text>
</comment>
<comment type="developmental stage">
    <text evidence="4 5">Expressed in the endoderm from the 14-somite stage. Aroound 9.5 dpc, present in the ventral prepancreatic and prehepatic regions (at protein level). At 14.5 dpc, expressed in brain, stomach and gut.</text>
</comment>
<comment type="induction">
    <text evidence="5">Transcriptionally regulated by ONECUT1 in the developing endoderm.</text>
</comment>
<comment type="similarity">
    <text evidence="6">Belongs to the CUT homeobox family.</text>
</comment>
<organism>
    <name type="scientific">Mus musculus</name>
    <name type="common">Mouse</name>
    <dbReference type="NCBI Taxonomy" id="10090"/>
    <lineage>
        <taxon>Eukaryota</taxon>
        <taxon>Metazoa</taxon>
        <taxon>Chordata</taxon>
        <taxon>Craniata</taxon>
        <taxon>Vertebrata</taxon>
        <taxon>Euteleostomi</taxon>
        <taxon>Mammalia</taxon>
        <taxon>Eutheria</taxon>
        <taxon>Euarchontoglires</taxon>
        <taxon>Glires</taxon>
        <taxon>Rodentia</taxon>
        <taxon>Myomorpha</taxon>
        <taxon>Muroidea</taxon>
        <taxon>Muridae</taxon>
        <taxon>Murinae</taxon>
        <taxon>Mus</taxon>
        <taxon>Mus</taxon>
    </lineage>
</organism>
<proteinExistence type="evidence at protein level"/>
<keyword id="KW-0010">Activator</keyword>
<keyword id="KW-0238">DNA-binding</keyword>
<keyword id="KW-0371">Homeobox</keyword>
<keyword id="KW-0539">Nucleus</keyword>
<keyword id="KW-1185">Reference proteome</keyword>
<keyword id="KW-0804">Transcription</keyword>
<keyword id="KW-0805">Transcription regulation</keyword>
<dbReference type="EMBL" id="AY080897">
    <property type="protein sequence ID" value="AAL86921.1"/>
    <property type="molecule type" value="mRNA"/>
</dbReference>
<dbReference type="EMBL" id="BC058700">
    <property type="protein sequence ID" value="AAH58700.1"/>
    <property type="molecule type" value="mRNA"/>
</dbReference>
<dbReference type="CCDS" id="CCDS24023.1"/>
<dbReference type="RefSeq" id="NP_631972.2">
    <property type="nucleotide sequence ID" value="NM_139226.3"/>
</dbReference>
<dbReference type="SMR" id="Q8K557"/>
<dbReference type="FunCoup" id="Q8K557">
    <property type="interactions" value="248"/>
</dbReference>
<dbReference type="STRING" id="10090.ENSMUSP00000053288"/>
<dbReference type="GlyGen" id="Q8K557">
    <property type="glycosylation" value="1 site"/>
</dbReference>
<dbReference type="PhosphoSitePlus" id="Q8K557"/>
<dbReference type="PaxDb" id="10090-ENSMUSP00000053288"/>
<dbReference type="ProteomicsDB" id="295471"/>
<dbReference type="Antibodypedia" id="5527">
    <property type="antibodies" value="144 antibodies from 19 providers"/>
</dbReference>
<dbReference type="DNASU" id="246086"/>
<dbReference type="Ensembl" id="ENSMUST00000051773.9">
    <property type="protein sequence ID" value="ENSMUSP00000053288.9"/>
    <property type="gene ID" value="ENSMUSG00000045518.9"/>
</dbReference>
<dbReference type="GeneID" id="246086"/>
<dbReference type="KEGG" id="mmu:246086"/>
<dbReference type="UCSC" id="uc007gdn.1">
    <property type="organism name" value="mouse"/>
</dbReference>
<dbReference type="AGR" id="MGI:1891409"/>
<dbReference type="CTD" id="390874"/>
<dbReference type="MGI" id="MGI:1891409">
    <property type="gene designation" value="Onecut3"/>
</dbReference>
<dbReference type="VEuPathDB" id="HostDB:ENSMUSG00000045518"/>
<dbReference type="eggNOG" id="KOG2252">
    <property type="taxonomic scope" value="Eukaryota"/>
</dbReference>
<dbReference type="GeneTree" id="ENSGT00950000183103"/>
<dbReference type="HOGENOM" id="CLU_018642_0_0_1"/>
<dbReference type="InParanoid" id="Q8K557"/>
<dbReference type="OMA" id="KFHQHAV"/>
<dbReference type="OrthoDB" id="10068888at2759"/>
<dbReference type="PhylomeDB" id="Q8K557"/>
<dbReference type="TreeFam" id="TF318206"/>
<dbReference type="BioGRID-ORCS" id="246086">
    <property type="hits" value="3 hits in 77 CRISPR screens"/>
</dbReference>
<dbReference type="ChiTaRS" id="Onecut3">
    <property type="organism name" value="mouse"/>
</dbReference>
<dbReference type="PRO" id="PR:Q8K557"/>
<dbReference type="Proteomes" id="UP000000589">
    <property type="component" value="Chromosome 10"/>
</dbReference>
<dbReference type="RNAct" id="Q8K557">
    <property type="molecule type" value="protein"/>
</dbReference>
<dbReference type="Bgee" id="ENSMUSG00000045518">
    <property type="expression patterns" value="Expressed in ureteric bud trunk and 46 other cell types or tissues"/>
</dbReference>
<dbReference type="GO" id="GO:0005829">
    <property type="term" value="C:cytosol"/>
    <property type="evidence" value="ECO:0000304"/>
    <property type="project" value="Reactome"/>
</dbReference>
<dbReference type="GO" id="GO:0005634">
    <property type="term" value="C:nucleus"/>
    <property type="evidence" value="ECO:0007669"/>
    <property type="project" value="UniProtKB-SubCell"/>
</dbReference>
<dbReference type="GO" id="GO:0005667">
    <property type="term" value="C:transcription regulator complex"/>
    <property type="evidence" value="ECO:0000314"/>
    <property type="project" value="MGI"/>
</dbReference>
<dbReference type="GO" id="GO:0001228">
    <property type="term" value="F:DNA-binding transcription activator activity, RNA polymerase II-specific"/>
    <property type="evidence" value="ECO:0000314"/>
    <property type="project" value="NTNU_SB"/>
</dbReference>
<dbReference type="GO" id="GO:0003700">
    <property type="term" value="F:DNA-binding transcription factor activity"/>
    <property type="evidence" value="ECO:0000314"/>
    <property type="project" value="MGI"/>
</dbReference>
<dbReference type="GO" id="GO:0000977">
    <property type="term" value="F:RNA polymerase II transcription regulatory region sequence-specific DNA binding"/>
    <property type="evidence" value="ECO:0000314"/>
    <property type="project" value="NTNU_SB"/>
</dbReference>
<dbReference type="GO" id="GO:0045944">
    <property type="term" value="P:positive regulation of transcription by RNA polymerase II"/>
    <property type="evidence" value="ECO:0000314"/>
    <property type="project" value="NTNU_SB"/>
</dbReference>
<dbReference type="GO" id="GO:0006357">
    <property type="term" value="P:regulation of transcription by RNA polymerase II"/>
    <property type="evidence" value="ECO:0000314"/>
    <property type="project" value="MGI"/>
</dbReference>
<dbReference type="CDD" id="cd00086">
    <property type="entry name" value="homeodomain"/>
    <property type="match status" value="1"/>
</dbReference>
<dbReference type="FunFam" id="1.10.10.60:FF:000054">
    <property type="entry name" value="One cut domain family member"/>
    <property type="match status" value="1"/>
</dbReference>
<dbReference type="FunFam" id="1.10.260.40:FF:000005">
    <property type="entry name" value="One cut domain family member"/>
    <property type="match status" value="1"/>
</dbReference>
<dbReference type="Gene3D" id="1.10.10.60">
    <property type="entry name" value="Homeodomain-like"/>
    <property type="match status" value="1"/>
</dbReference>
<dbReference type="Gene3D" id="1.10.260.40">
    <property type="entry name" value="lambda repressor-like DNA-binding domains"/>
    <property type="match status" value="1"/>
</dbReference>
<dbReference type="InterPro" id="IPR003350">
    <property type="entry name" value="CUT_dom"/>
</dbReference>
<dbReference type="InterPro" id="IPR051649">
    <property type="entry name" value="CUT_Homeobox"/>
</dbReference>
<dbReference type="InterPro" id="IPR001356">
    <property type="entry name" value="HD"/>
</dbReference>
<dbReference type="InterPro" id="IPR009057">
    <property type="entry name" value="Homeodomain-like_sf"/>
</dbReference>
<dbReference type="InterPro" id="IPR010982">
    <property type="entry name" value="Lambda_DNA-bd_dom_sf"/>
</dbReference>
<dbReference type="PANTHER" id="PTHR14057:SF34">
    <property type="entry name" value="ONE CUT DOMAIN FAMILY MEMBER 3"/>
    <property type="match status" value="1"/>
</dbReference>
<dbReference type="PANTHER" id="PTHR14057">
    <property type="entry name" value="TRANSCRIPTION FACTOR ONECUT"/>
    <property type="match status" value="1"/>
</dbReference>
<dbReference type="Pfam" id="PF02376">
    <property type="entry name" value="CUT"/>
    <property type="match status" value="1"/>
</dbReference>
<dbReference type="Pfam" id="PF00046">
    <property type="entry name" value="Homeodomain"/>
    <property type="match status" value="1"/>
</dbReference>
<dbReference type="SMART" id="SM01109">
    <property type="entry name" value="CUT"/>
    <property type="match status" value="1"/>
</dbReference>
<dbReference type="SMART" id="SM00389">
    <property type="entry name" value="HOX"/>
    <property type="match status" value="1"/>
</dbReference>
<dbReference type="SUPFAM" id="SSF46689">
    <property type="entry name" value="Homeodomain-like"/>
    <property type="match status" value="1"/>
</dbReference>
<dbReference type="SUPFAM" id="SSF47413">
    <property type="entry name" value="lambda repressor-like DNA-binding domains"/>
    <property type="match status" value="1"/>
</dbReference>
<dbReference type="PROSITE" id="PS51042">
    <property type="entry name" value="CUT"/>
    <property type="match status" value="1"/>
</dbReference>
<dbReference type="PROSITE" id="PS50071">
    <property type="entry name" value="HOMEOBOX_2"/>
    <property type="match status" value="1"/>
</dbReference>